<keyword id="KW-0158">Chromosome</keyword>
<keyword id="KW-0238">DNA-binding</keyword>
<keyword id="KW-0479">Metal-binding</keyword>
<keyword id="KW-0539">Nucleus</keyword>
<keyword id="KW-1185">Reference proteome</keyword>
<keyword id="KW-0677">Repeat</keyword>
<keyword id="KW-0779">Telomere</keyword>
<keyword id="KW-0804">Transcription</keyword>
<keyword id="KW-0805">Transcription regulation</keyword>
<keyword id="KW-0862">Zinc</keyword>
<keyword id="KW-0863">Zinc-finger</keyword>
<accession>Q80VJ6</accession>
<comment type="function">
    <text evidence="5 6 7">Embryonic stem (ES) cell-specific transcription factor required to regulate ES cell pluripotency. Binds telomeres and plays a key role in genomic stability in ES cells by regulating telomere elongation. Acts as an activator of spontaneous telomere sister chromatid exchange (T-SCE) and telomere elongation in undifferentiated ES cells.</text>
</comment>
<comment type="subcellular location">
    <subcellularLocation>
        <location evidence="2 7">Nucleus</location>
    </subcellularLocation>
    <subcellularLocation>
        <location evidence="7">Chromosome</location>
        <location evidence="7">Telomere</location>
    </subcellularLocation>
</comment>
<comment type="tissue specificity">
    <text evidence="5 7">Embryonic stem (ES) cell-specific. Expressed in only 5% of ES cells at a given time, but nearly all ES cells express it at least once during 9 passages.</text>
</comment>
<comment type="induction">
    <text evidence="4">Transcriptionally regulated by ZSCAN10.</text>
</comment>
<organism>
    <name type="scientific">Mus musculus</name>
    <name type="common">Mouse</name>
    <dbReference type="NCBI Taxonomy" id="10090"/>
    <lineage>
        <taxon>Eukaryota</taxon>
        <taxon>Metazoa</taxon>
        <taxon>Chordata</taxon>
        <taxon>Craniata</taxon>
        <taxon>Vertebrata</taxon>
        <taxon>Euteleostomi</taxon>
        <taxon>Mammalia</taxon>
        <taxon>Eutheria</taxon>
        <taxon>Euarchontoglires</taxon>
        <taxon>Glires</taxon>
        <taxon>Rodentia</taxon>
        <taxon>Myomorpha</taxon>
        <taxon>Muroidea</taxon>
        <taxon>Muridae</taxon>
        <taxon>Murinae</taxon>
        <taxon>Mus</taxon>
        <taxon>Mus</taxon>
    </lineage>
</organism>
<reference key="1">
    <citation type="journal article" date="2009" name="PLoS Biol.">
        <title>Lineage-specific biology revealed by a finished genome assembly of the mouse.</title>
        <authorList>
            <person name="Church D.M."/>
            <person name="Goodstadt L."/>
            <person name="Hillier L.W."/>
            <person name="Zody M.C."/>
            <person name="Goldstein S."/>
            <person name="She X."/>
            <person name="Bult C.J."/>
            <person name="Agarwala R."/>
            <person name="Cherry J.L."/>
            <person name="DiCuccio M."/>
            <person name="Hlavina W."/>
            <person name="Kapustin Y."/>
            <person name="Meric P."/>
            <person name="Maglott D."/>
            <person name="Birtle Z."/>
            <person name="Marques A.C."/>
            <person name="Graves T."/>
            <person name="Zhou S."/>
            <person name="Teague B."/>
            <person name="Potamousis K."/>
            <person name="Churas C."/>
            <person name="Place M."/>
            <person name="Herschleb J."/>
            <person name="Runnheim R."/>
            <person name="Forrest D."/>
            <person name="Amos-Landgraf J."/>
            <person name="Schwartz D.C."/>
            <person name="Cheng Z."/>
            <person name="Lindblad-Toh K."/>
            <person name="Eichler E.E."/>
            <person name="Ponting C.P."/>
        </authorList>
    </citation>
    <scope>NUCLEOTIDE SEQUENCE [LARGE SCALE GENOMIC DNA]</scope>
    <source>
        <strain>C57BL/6J</strain>
    </source>
</reference>
<reference key="2">
    <citation type="journal article" date="2004" name="Genome Res.">
        <title>The status, quality, and expansion of the NIH full-length cDNA project: the Mammalian Gene Collection (MGC).</title>
        <authorList>
            <consortium name="The MGC Project Team"/>
        </authorList>
    </citation>
    <scope>NUCLEOTIDE SEQUENCE [LARGE SCALE MRNA]</scope>
    <source>
        <strain>129/Sv X 129SvCp</strain>
        <tissue>Embryonic stem cell</tissue>
    </source>
</reference>
<reference key="3">
    <citation type="journal article" date="2006" name="Nucleic Acids Res.">
        <title>Zfp206 regulates ES cell gene expression and differentiation.</title>
        <authorList>
            <person name="Zhang W."/>
            <person name="Walker E."/>
            <person name="Tamplin O.J."/>
            <person name="Rossant J."/>
            <person name="Stanford W.L."/>
            <person name="Hughes T.R."/>
        </authorList>
    </citation>
    <scope>INDUCTION</scope>
</reference>
<reference key="4">
    <citation type="journal article" date="2007" name="Dev. Biol.">
        <title>Zscan4: a novel gene expressed exclusively in late 2-cell embryos and embryonic stem cells.</title>
        <authorList>
            <person name="Falco G."/>
            <person name="Lee S.L."/>
            <person name="Stanghellini I."/>
            <person name="Bassey U.C."/>
            <person name="Hamatani T."/>
            <person name="Ko M.S."/>
        </authorList>
    </citation>
    <scope>FUNCTION</scope>
    <scope>TISSUE SPECIFICITY</scope>
</reference>
<reference key="5">
    <citation type="journal article" date="2009" name="Stem Cells">
        <title>Characterization of the phosphoinositide 3-kinase-dependent transcriptome in murine embryonic stem cells: identification of novel regulators of pluripotency.</title>
        <authorList>
            <person name="Storm M.P."/>
            <person name="Kumpfmueller B."/>
            <person name="Thompson B."/>
            <person name="Kolde R."/>
            <person name="Vilo J."/>
            <person name="Hummel O."/>
            <person name="Schulz H."/>
            <person name="Welham M.J."/>
        </authorList>
    </citation>
    <scope>FUNCTION</scope>
</reference>
<reference key="6">
    <citation type="journal article" date="2010" name="Nature">
        <title>Zscan4 regulates telomere elongation and genomic stability in ES cells.</title>
        <authorList>
            <person name="Zalzman M."/>
            <person name="Falco G."/>
            <person name="Sharova L.V."/>
            <person name="Nishiyama A."/>
            <person name="Thomas M."/>
            <person name="Lee S.L."/>
            <person name="Stagg C.A."/>
            <person name="Hoang H.G."/>
            <person name="Yang H.T."/>
            <person name="Indig F.E."/>
            <person name="Wersto R.P."/>
            <person name="Ko M.S."/>
        </authorList>
    </citation>
    <scope>FUNCTION</scope>
    <scope>SUBCELLULAR LOCATION</scope>
    <scope>TISSUE SPECIFICITY</scope>
</reference>
<feature type="chain" id="PRO_0000394244" description="Zinc finger and SCAN domain containing protein 4C">
    <location>
        <begin position="1"/>
        <end position="506"/>
    </location>
</feature>
<feature type="domain" description="SCAN box" evidence="2">
    <location>
        <begin position="37"/>
        <end position="119"/>
    </location>
</feature>
<feature type="zinc finger region" description="C2H2-type 1" evidence="1">
    <location>
        <begin position="395"/>
        <end position="417"/>
    </location>
</feature>
<feature type="zinc finger region" description="C2H2-type 2" evidence="1">
    <location>
        <begin position="424"/>
        <end position="446"/>
    </location>
</feature>
<feature type="zinc finger region" description="C2H2-type 3" evidence="1">
    <location>
        <begin position="452"/>
        <end position="474"/>
    </location>
</feature>
<feature type="zinc finger region" description="C2H2-type 4" evidence="1">
    <location>
        <begin position="480"/>
        <end position="503"/>
    </location>
</feature>
<feature type="region of interest" description="Disordered" evidence="3">
    <location>
        <begin position="1"/>
        <end position="24"/>
    </location>
</feature>
<proteinExistence type="evidence at transcript level"/>
<sequence length="506" mass="57600">MASQQAPAKDLQTNNLEFTPTDSSGVQWAEDISNSPSAQLNFSPSNNGCWATQELQSLWKMFNSWLQPEKQTKEQMISQLVLEQFLLTGHCKDKYALTEKWKASGSDMRRFMESLTDECLKPPVMVHVSMQGQEALFSENMPLKEVIKLLKQQQSATRPTPDNEQMPVDTTQDRLLATGQENSENECNNSCNATEANVGESCSGNEMDSLLIIQKEQHPEHEEGNVVCQFPHGARRASQGTPSHHVDFPSAPTTADVPMEEQPKDLSRENISEDKNNCYNTSRNAATQVYSGDNIPRNKSDSLFINKRIYHPEPEVGDIPYGVPQDSTRASQGTSTCLQESLGECFSENDPREVPGLQSRQEQPISDPVLLGKNHEANLPCESHQKRFCRDAKLYKCEECSRMFKHARSLSSHQRTHLNKKSELLCVTCQKMFKRVSDRRTHEIIHMPEKPFKCSTCEKSFSHKTNLKSHEMIHTGEMPYVCSLCSRRFRQSSTYHRHLRNYHRSD</sequence>
<evidence type="ECO:0000255" key="1">
    <source>
        <dbReference type="PROSITE-ProRule" id="PRU00042"/>
    </source>
</evidence>
<evidence type="ECO:0000255" key="2">
    <source>
        <dbReference type="PROSITE-ProRule" id="PRU00187"/>
    </source>
</evidence>
<evidence type="ECO:0000256" key="3">
    <source>
        <dbReference type="SAM" id="MobiDB-lite"/>
    </source>
</evidence>
<evidence type="ECO:0000269" key="4">
    <source>
    </source>
</evidence>
<evidence type="ECO:0000269" key="5">
    <source>
    </source>
</evidence>
<evidence type="ECO:0000269" key="6">
    <source>
    </source>
</evidence>
<evidence type="ECO:0000269" key="7">
    <source>
    </source>
</evidence>
<gene>
    <name type="primary">Zscan4c</name>
    <name type="synonym">Gm397</name>
</gene>
<protein>
    <recommendedName>
        <fullName>Zinc finger and SCAN domain containing protein 4C</fullName>
    </recommendedName>
</protein>
<dbReference type="EMBL" id="AC166368">
    <property type="status" value="NOT_ANNOTATED_CDS"/>
    <property type="molecule type" value="Genomic_DNA"/>
</dbReference>
<dbReference type="EMBL" id="BC050218">
    <property type="protein sequence ID" value="AAH50218.1"/>
    <property type="molecule type" value="mRNA"/>
</dbReference>
<dbReference type="CCDS" id="CCDS52012.1"/>
<dbReference type="RefSeq" id="NP_001013787.1">
    <property type="nucleotide sequence ID" value="NM_001013765.2"/>
</dbReference>
<dbReference type="SMR" id="Q80VJ6"/>
<dbReference type="BioGRID" id="232724">
    <property type="interactions" value="1"/>
</dbReference>
<dbReference type="FunCoup" id="Q80VJ6">
    <property type="interactions" value="99"/>
</dbReference>
<dbReference type="STRING" id="10090.ENSMUSP00000118506"/>
<dbReference type="GlyGen" id="Q80VJ6">
    <property type="glycosylation" value="2 sites"/>
</dbReference>
<dbReference type="iPTMnet" id="Q80VJ6"/>
<dbReference type="PhosphoSitePlus" id="Q80VJ6"/>
<dbReference type="PaxDb" id="10090-ENSMUSP00000118506"/>
<dbReference type="DNASU" id="245109"/>
<dbReference type="Ensembl" id="ENSMUST00000131379.4">
    <property type="protein sequence ID" value="ENSMUSP00000118506.3"/>
    <property type="gene ID" value="ENSMUSG00000054272.7"/>
</dbReference>
<dbReference type="GeneID" id="245109"/>
<dbReference type="KEGG" id="mmu:245109"/>
<dbReference type="UCSC" id="uc009fdl.1">
    <property type="organism name" value="mouse"/>
</dbReference>
<dbReference type="AGR" id="MGI:2685243"/>
<dbReference type="CTD" id="245109"/>
<dbReference type="MGI" id="MGI:2685243">
    <property type="gene designation" value="Zscan4c"/>
</dbReference>
<dbReference type="VEuPathDB" id="HostDB:ENSMUSG00000054272"/>
<dbReference type="eggNOG" id="KOG1721">
    <property type="taxonomic scope" value="Eukaryota"/>
</dbReference>
<dbReference type="GeneTree" id="ENSGT00390000012244"/>
<dbReference type="HOGENOM" id="CLU_002678_49_10_1"/>
<dbReference type="InParanoid" id="Q80VJ6"/>
<dbReference type="OrthoDB" id="85144at9989"/>
<dbReference type="PhylomeDB" id="Q80VJ6"/>
<dbReference type="TreeFam" id="TF337216"/>
<dbReference type="BioGRID-ORCS" id="245109">
    <property type="hits" value="8 hits in 42 CRISPR screens"/>
</dbReference>
<dbReference type="ChiTaRS" id="Zscan4c">
    <property type="organism name" value="mouse"/>
</dbReference>
<dbReference type="PRO" id="PR:Q80VJ6"/>
<dbReference type="Proteomes" id="UP000000589">
    <property type="component" value="Chromosome 7"/>
</dbReference>
<dbReference type="RNAct" id="Q80VJ6">
    <property type="molecule type" value="protein"/>
</dbReference>
<dbReference type="Bgee" id="ENSMUSG00000054272">
    <property type="expression patterns" value="Expressed in secondary oocyte and 2 other cell types or tissues"/>
</dbReference>
<dbReference type="GO" id="GO:0000781">
    <property type="term" value="C:chromosome, telomeric region"/>
    <property type="evidence" value="ECO:0000314"/>
    <property type="project" value="UniProtKB"/>
</dbReference>
<dbReference type="GO" id="GO:0005737">
    <property type="term" value="C:cytoplasm"/>
    <property type="evidence" value="ECO:0000314"/>
    <property type="project" value="MGI"/>
</dbReference>
<dbReference type="GO" id="GO:0005654">
    <property type="term" value="C:nucleoplasm"/>
    <property type="evidence" value="ECO:0000304"/>
    <property type="project" value="Reactome"/>
</dbReference>
<dbReference type="GO" id="GO:0005634">
    <property type="term" value="C:nucleus"/>
    <property type="evidence" value="ECO:0000314"/>
    <property type="project" value="MGI"/>
</dbReference>
<dbReference type="GO" id="GO:0003677">
    <property type="term" value="F:DNA binding"/>
    <property type="evidence" value="ECO:0007669"/>
    <property type="project" value="UniProtKB-KW"/>
</dbReference>
<dbReference type="GO" id="GO:0008270">
    <property type="term" value="F:zinc ion binding"/>
    <property type="evidence" value="ECO:0007669"/>
    <property type="project" value="UniProtKB-KW"/>
</dbReference>
<dbReference type="GO" id="GO:0006312">
    <property type="term" value="P:mitotic recombination"/>
    <property type="evidence" value="ECO:0000314"/>
    <property type="project" value="MGI"/>
</dbReference>
<dbReference type="GO" id="GO:0045950">
    <property type="term" value="P:negative regulation of mitotic recombination"/>
    <property type="evidence" value="ECO:0000314"/>
    <property type="project" value="MGI"/>
</dbReference>
<dbReference type="GO" id="GO:0006357">
    <property type="term" value="P:regulation of transcription by RNA polymerase II"/>
    <property type="evidence" value="ECO:0000314"/>
    <property type="project" value="MGI"/>
</dbReference>
<dbReference type="GO" id="GO:0048863">
    <property type="term" value="P:stem cell differentiation"/>
    <property type="evidence" value="ECO:0000304"/>
    <property type="project" value="UniProtKB"/>
</dbReference>
<dbReference type="GO" id="GO:0010833">
    <property type="term" value="P:telomere maintenance via telomere lengthening"/>
    <property type="evidence" value="ECO:0000314"/>
    <property type="project" value="MGI"/>
</dbReference>
<dbReference type="FunFam" id="3.30.160.60:FF:004431">
    <property type="match status" value="1"/>
</dbReference>
<dbReference type="FunFam" id="3.30.160.60:FF:001485">
    <property type="entry name" value="Krueppel-related zinc finger protein"/>
    <property type="match status" value="1"/>
</dbReference>
<dbReference type="FunFam" id="1.10.4020.10:FF:000004">
    <property type="entry name" value="Zinc finger and SCAN domain containing 4"/>
    <property type="match status" value="1"/>
</dbReference>
<dbReference type="FunFam" id="3.30.160.60:FF:001779">
    <property type="entry name" value="Zinc finger and SCAN domain containing 4"/>
    <property type="match status" value="1"/>
</dbReference>
<dbReference type="FunFam" id="3.30.160.60:FF:003083">
    <property type="entry name" value="Zinc finger and SCAN domain containing protein 4F"/>
    <property type="match status" value="1"/>
</dbReference>
<dbReference type="Gene3D" id="3.30.160.60">
    <property type="entry name" value="Classic Zinc Finger"/>
    <property type="match status" value="4"/>
</dbReference>
<dbReference type="Gene3D" id="1.10.4020.10">
    <property type="entry name" value="DNA breaking-rejoining enzymes"/>
    <property type="match status" value="1"/>
</dbReference>
<dbReference type="InterPro" id="IPR003309">
    <property type="entry name" value="SCAN_dom"/>
</dbReference>
<dbReference type="InterPro" id="IPR038269">
    <property type="entry name" value="SCAN_sf"/>
</dbReference>
<dbReference type="InterPro" id="IPR036236">
    <property type="entry name" value="Znf_C2H2_sf"/>
</dbReference>
<dbReference type="InterPro" id="IPR013087">
    <property type="entry name" value="Znf_C2H2_type"/>
</dbReference>
<dbReference type="PANTHER" id="PTHR23226">
    <property type="entry name" value="ZINC FINGER AND SCAN DOMAIN-CONTAINING"/>
    <property type="match status" value="1"/>
</dbReference>
<dbReference type="PANTHER" id="PTHR23226:SF88">
    <property type="entry name" value="ZINC FINGER AND SCAN DOMAIN-CONTAINING PROTEIN 4"/>
    <property type="match status" value="1"/>
</dbReference>
<dbReference type="Pfam" id="PF02023">
    <property type="entry name" value="SCAN"/>
    <property type="match status" value="1"/>
</dbReference>
<dbReference type="Pfam" id="PF00096">
    <property type="entry name" value="zf-C2H2"/>
    <property type="match status" value="3"/>
</dbReference>
<dbReference type="SMART" id="SM00431">
    <property type="entry name" value="SCAN"/>
    <property type="match status" value="1"/>
</dbReference>
<dbReference type="SMART" id="SM00355">
    <property type="entry name" value="ZnF_C2H2"/>
    <property type="match status" value="4"/>
</dbReference>
<dbReference type="SUPFAM" id="SSF57667">
    <property type="entry name" value="beta-beta-alpha zinc fingers"/>
    <property type="match status" value="2"/>
</dbReference>
<dbReference type="SUPFAM" id="SSF47353">
    <property type="entry name" value="Retrovirus capsid dimerization domain-like"/>
    <property type="match status" value="1"/>
</dbReference>
<dbReference type="PROSITE" id="PS50804">
    <property type="entry name" value="SCAN_BOX"/>
    <property type="match status" value="1"/>
</dbReference>
<dbReference type="PROSITE" id="PS00028">
    <property type="entry name" value="ZINC_FINGER_C2H2_1"/>
    <property type="match status" value="4"/>
</dbReference>
<dbReference type="PROSITE" id="PS50157">
    <property type="entry name" value="ZINC_FINGER_C2H2_2"/>
    <property type="match status" value="4"/>
</dbReference>
<name>ZSC4C_MOUSE</name>